<name>FYV10_ASPCL</name>
<gene>
    <name type="primary">fyv10</name>
    <name type="ORF">ACLA_009000</name>
</gene>
<dbReference type="EMBL" id="DS027049">
    <property type="protein sequence ID" value="EAW12480.1"/>
    <property type="molecule type" value="Genomic_DNA"/>
</dbReference>
<dbReference type="RefSeq" id="XP_001273906.1">
    <property type="nucleotide sequence ID" value="XM_001273905.1"/>
</dbReference>
<dbReference type="SMR" id="A1C9R2"/>
<dbReference type="STRING" id="344612.A1C9R2"/>
<dbReference type="EnsemblFungi" id="EAW12480">
    <property type="protein sequence ID" value="EAW12480"/>
    <property type="gene ID" value="ACLA_009000"/>
</dbReference>
<dbReference type="GeneID" id="4706351"/>
<dbReference type="KEGG" id="act:ACLA_009000"/>
<dbReference type="VEuPathDB" id="FungiDB:ACLA_009000"/>
<dbReference type="eggNOG" id="KOG0396">
    <property type="taxonomic scope" value="Eukaryota"/>
</dbReference>
<dbReference type="HOGENOM" id="CLU_027445_2_0_1"/>
<dbReference type="OMA" id="ANHETAR"/>
<dbReference type="OrthoDB" id="1933455at2759"/>
<dbReference type="Proteomes" id="UP000006701">
    <property type="component" value="Unassembled WGS sequence"/>
</dbReference>
<dbReference type="GO" id="GO:0005737">
    <property type="term" value="C:cytoplasm"/>
    <property type="evidence" value="ECO:0007669"/>
    <property type="project" value="UniProtKB-SubCell"/>
</dbReference>
<dbReference type="GO" id="GO:0034657">
    <property type="term" value="C:GID complex"/>
    <property type="evidence" value="ECO:0007669"/>
    <property type="project" value="TreeGrafter"/>
</dbReference>
<dbReference type="GO" id="GO:0005634">
    <property type="term" value="C:nucleus"/>
    <property type="evidence" value="ECO:0007669"/>
    <property type="project" value="UniProtKB-SubCell"/>
</dbReference>
<dbReference type="GO" id="GO:0061630">
    <property type="term" value="F:ubiquitin protein ligase activity"/>
    <property type="evidence" value="ECO:0007669"/>
    <property type="project" value="InterPro"/>
</dbReference>
<dbReference type="GO" id="GO:0008270">
    <property type="term" value="F:zinc ion binding"/>
    <property type="evidence" value="ECO:0007669"/>
    <property type="project" value="UniProtKB-KW"/>
</dbReference>
<dbReference type="GO" id="GO:0045721">
    <property type="term" value="P:negative regulation of gluconeogenesis"/>
    <property type="evidence" value="ECO:0007669"/>
    <property type="project" value="UniProtKB-ARBA"/>
</dbReference>
<dbReference type="GO" id="GO:0043161">
    <property type="term" value="P:proteasome-mediated ubiquitin-dependent protein catabolic process"/>
    <property type="evidence" value="ECO:0007669"/>
    <property type="project" value="InterPro"/>
</dbReference>
<dbReference type="InterPro" id="IPR013144">
    <property type="entry name" value="CRA_dom"/>
</dbReference>
<dbReference type="InterPro" id="IPR024964">
    <property type="entry name" value="CTLH/CRA"/>
</dbReference>
<dbReference type="InterPro" id="IPR006595">
    <property type="entry name" value="CTLH_C"/>
</dbReference>
<dbReference type="InterPro" id="IPR045098">
    <property type="entry name" value="Fyv10_fam"/>
</dbReference>
<dbReference type="InterPro" id="IPR006594">
    <property type="entry name" value="LisH"/>
</dbReference>
<dbReference type="InterPro" id="IPR044063">
    <property type="entry name" value="ZF_RING_GID"/>
</dbReference>
<dbReference type="PANTHER" id="PTHR12170:SF2">
    <property type="entry name" value="E3 UBIQUITIN-PROTEIN TRANSFERASE MAEA"/>
    <property type="match status" value="1"/>
</dbReference>
<dbReference type="PANTHER" id="PTHR12170">
    <property type="entry name" value="MACROPHAGE ERYTHROBLAST ATTACHER-RELATED"/>
    <property type="match status" value="1"/>
</dbReference>
<dbReference type="Pfam" id="PF10607">
    <property type="entry name" value="CTLH"/>
    <property type="match status" value="1"/>
</dbReference>
<dbReference type="SMART" id="SM00757">
    <property type="entry name" value="CRA"/>
    <property type="match status" value="1"/>
</dbReference>
<dbReference type="SMART" id="SM00668">
    <property type="entry name" value="CTLH"/>
    <property type="match status" value="1"/>
</dbReference>
<dbReference type="SMART" id="SM00667">
    <property type="entry name" value="LisH"/>
    <property type="match status" value="1"/>
</dbReference>
<dbReference type="PROSITE" id="PS50897">
    <property type="entry name" value="CTLH"/>
    <property type="match status" value="1"/>
</dbReference>
<dbReference type="PROSITE" id="PS50896">
    <property type="entry name" value="LISH"/>
    <property type="match status" value="1"/>
</dbReference>
<dbReference type="PROSITE" id="PS51867">
    <property type="entry name" value="ZF_RING_GID"/>
    <property type="match status" value="1"/>
</dbReference>
<organism>
    <name type="scientific">Aspergillus clavatus (strain ATCC 1007 / CBS 513.65 / DSM 816 / NCTC 3887 / NRRL 1 / QM 1276 / 107)</name>
    <dbReference type="NCBI Taxonomy" id="344612"/>
    <lineage>
        <taxon>Eukaryota</taxon>
        <taxon>Fungi</taxon>
        <taxon>Dikarya</taxon>
        <taxon>Ascomycota</taxon>
        <taxon>Pezizomycotina</taxon>
        <taxon>Eurotiomycetes</taxon>
        <taxon>Eurotiomycetidae</taxon>
        <taxon>Eurotiales</taxon>
        <taxon>Aspergillaceae</taxon>
        <taxon>Aspergillus</taxon>
        <taxon>Aspergillus subgen. Fumigati</taxon>
    </lineage>
</organism>
<evidence type="ECO:0000250" key="1"/>
<evidence type="ECO:0000255" key="2">
    <source>
        <dbReference type="PROSITE-ProRule" id="PRU00058"/>
    </source>
</evidence>
<evidence type="ECO:0000255" key="3">
    <source>
        <dbReference type="PROSITE-ProRule" id="PRU00126"/>
    </source>
</evidence>
<evidence type="ECO:0000255" key="4">
    <source>
        <dbReference type="PROSITE-ProRule" id="PRU01215"/>
    </source>
</evidence>
<evidence type="ECO:0000305" key="5"/>
<reference key="1">
    <citation type="journal article" date="2008" name="PLoS Genet.">
        <title>Genomic islands in the pathogenic filamentous fungus Aspergillus fumigatus.</title>
        <authorList>
            <person name="Fedorova N.D."/>
            <person name="Khaldi N."/>
            <person name="Joardar V.S."/>
            <person name="Maiti R."/>
            <person name="Amedeo P."/>
            <person name="Anderson M.J."/>
            <person name="Crabtree J."/>
            <person name="Silva J.C."/>
            <person name="Badger J.H."/>
            <person name="Albarraq A."/>
            <person name="Angiuoli S."/>
            <person name="Bussey H."/>
            <person name="Bowyer P."/>
            <person name="Cotty P.J."/>
            <person name="Dyer P.S."/>
            <person name="Egan A."/>
            <person name="Galens K."/>
            <person name="Fraser-Liggett C.M."/>
            <person name="Haas B.J."/>
            <person name="Inman J.M."/>
            <person name="Kent R."/>
            <person name="Lemieux S."/>
            <person name="Malavazi I."/>
            <person name="Orvis J."/>
            <person name="Roemer T."/>
            <person name="Ronning C.M."/>
            <person name="Sundaram J.P."/>
            <person name="Sutton G."/>
            <person name="Turner G."/>
            <person name="Venter J.C."/>
            <person name="White O.R."/>
            <person name="Whitty B.R."/>
            <person name="Youngman P."/>
            <person name="Wolfe K.H."/>
            <person name="Goldman G.H."/>
            <person name="Wortman J.R."/>
            <person name="Jiang B."/>
            <person name="Denning D.W."/>
            <person name="Nierman W.C."/>
        </authorList>
    </citation>
    <scope>NUCLEOTIDE SEQUENCE [LARGE SCALE GENOMIC DNA]</scope>
    <source>
        <strain>ATCC 1007 / CBS 513.65 / DSM 816 / NCTC 3887 / NRRL 1 / QM 1276 / 107</strain>
    </source>
</reference>
<proteinExistence type="inferred from homology"/>
<sequence length="406" mass="46483">MAAELTSTKLNAENHLLLDQPLLRVPHELARRNFKSVQRLVEREREYVLPALKEAANASLANTQTPDQTLAALDAMISRMQGLKRKMESLQEEEKRIQEQSRKRIQHLECLHQIPSLADVKYDQWSRVRLDRLVIDHMLRSGYTASAQQLAQEKGIVDLVDLDVFTQCQRIAQSLRHGETRDALQWCNENKAALKKSRFNLEFELRLQQYIEIIRTGDRGRFIDAMAHAKRYLTPYIETQSMEIHRAAGLLAFPRDTKADPYKSMYSSDRWTYLSDLFIRTHHELLSLSSRPLLHIALSAGLSALKTPSCHSEYTSPSSNSLSTTTSVCPICSTELKELARNMPYAHHAKSYVENDPIILPNGRIYGQQRLLDMSKKVGCVETGKVKDPTTGEIFDESEMKKVYIM</sequence>
<feature type="chain" id="PRO_0000292450" description="Protein fyv10">
    <location>
        <begin position="1"/>
        <end position="406"/>
    </location>
</feature>
<feature type="domain" description="LisH" evidence="3">
    <location>
        <begin position="126"/>
        <end position="158"/>
    </location>
</feature>
<feature type="domain" description="CTLH" evidence="2">
    <location>
        <begin position="164"/>
        <end position="221"/>
    </location>
</feature>
<feature type="zinc finger region" description="RING-Gid-type" evidence="4">
    <location>
        <begin position="329"/>
        <end position="391"/>
    </location>
</feature>
<keyword id="KW-0963">Cytoplasm</keyword>
<keyword id="KW-0479">Metal-binding</keyword>
<keyword id="KW-0539">Nucleus</keyword>
<keyword id="KW-1185">Reference proteome</keyword>
<keyword id="KW-0862">Zinc</keyword>
<keyword id="KW-0863">Zinc-finger</keyword>
<protein>
    <recommendedName>
        <fullName>Protein fyv10</fullName>
    </recommendedName>
</protein>
<accession>A1C9R2</accession>
<comment type="function">
    <text evidence="1">Involved in the proteasome-dependent degradation of fructose-1,6-bisphosphatase.</text>
</comment>
<comment type="subcellular location">
    <subcellularLocation>
        <location evidence="1">Cytoplasm</location>
    </subcellularLocation>
    <subcellularLocation>
        <location evidence="1">Nucleus</location>
    </subcellularLocation>
</comment>
<comment type="similarity">
    <text evidence="5">Belongs to the FYV10 family.</text>
</comment>